<protein>
    <recommendedName>
        <fullName evidence="1">Tyrosine--tRNA ligase</fullName>
        <ecNumber evidence="1">6.1.1.1</ecNumber>
    </recommendedName>
    <alternativeName>
        <fullName evidence="1">Tyrosyl-tRNA synthetase</fullName>
        <shortName evidence="1">TyrRS</shortName>
    </alternativeName>
</protein>
<accession>C4K0N9</accession>
<evidence type="ECO:0000255" key="1">
    <source>
        <dbReference type="HAMAP-Rule" id="MF_02006"/>
    </source>
</evidence>
<organism>
    <name type="scientific">Rickettsia peacockii (strain Rustic)</name>
    <dbReference type="NCBI Taxonomy" id="562019"/>
    <lineage>
        <taxon>Bacteria</taxon>
        <taxon>Pseudomonadati</taxon>
        <taxon>Pseudomonadota</taxon>
        <taxon>Alphaproteobacteria</taxon>
        <taxon>Rickettsiales</taxon>
        <taxon>Rickettsiaceae</taxon>
        <taxon>Rickettsieae</taxon>
        <taxon>Rickettsia</taxon>
        <taxon>spotted fever group</taxon>
    </lineage>
</organism>
<comment type="function">
    <text evidence="1">Catalyzes the attachment of tyrosine to tRNA(Tyr) in a two-step reaction: tyrosine is first activated by ATP to form Tyr-AMP and then transferred to the acceptor end of tRNA(Tyr).</text>
</comment>
<comment type="catalytic activity">
    <reaction evidence="1">
        <text>tRNA(Tyr) + L-tyrosine + ATP = L-tyrosyl-tRNA(Tyr) + AMP + diphosphate + H(+)</text>
        <dbReference type="Rhea" id="RHEA:10220"/>
        <dbReference type="Rhea" id="RHEA-COMP:9706"/>
        <dbReference type="Rhea" id="RHEA-COMP:9707"/>
        <dbReference type="ChEBI" id="CHEBI:15378"/>
        <dbReference type="ChEBI" id="CHEBI:30616"/>
        <dbReference type="ChEBI" id="CHEBI:33019"/>
        <dbReference type="ChEBI" id="CHEBI:58315"/>
        <dbReference type="ChEBI" id="CHEBI:78442"/>
        <dbReference type="ChEBI" id="CHEBI:78536"/>
        <dbReference type="ChEBI" id="CHEBI:456215"/>
        <dbReference type="EC" id="6.1.1.1"/>
    </reaction>
</comment>
<comment type="subunit">
    <text evidence="1">Homodimer.</text>
</comment>
<comment type="subcellular location">
    <subcellularLocation>
        <location evidence="1">Cytoplasm</location>
    </subcellularLocation>
</comment>
<comment type="similarity">
    <text evidence="1">Belongs to the class-I aminoacyl-tRNA synthetase family. TyrS type 1 subfamily.</text>
</comment>
<reference key="1">
    <citation type="journal article" date="2009" name="PLoS ONE">
        <title>Genome sequence of the endosymbiont Rickettsia peacockii and comparison with virulent Rickettsia rickettsii: identification of virulence factors.</title>
        <authorList>
            <person name="Felsheim R.F."/>
            <person name="Kurtti T.J."/>
            <person name="Munderloh U.G."/>
        </authorList>
    </citation>
    <scope>NUCLEOTIDE SEQUENCE [LARGE SCALE GENOMIC DNA]</scope>
    <source>
        <strain>Rustic</strain>
    </source>
</reference>
<gene>
    <name evidence="1" type="primary">tyrS</name>
    <name type="ordered locus">RPR_00970</name>
</gene>
<sequence length="411" mass="46593">MRFIEEFINKGYFHQCTDLDRLTAITKETKIAAYIGFDCTATSLHIGSLMQIMILRLLQQHGHKPIVIIGGGTSKIGDPTWKDEVRKILSKEDIAKNAEGIKKSLSKFIKFGDGKSDAIMLDNAEWLDSFNYLDFLRDFGSYFSVNRMLTMDSVKLRLEREQHLSFLEFNYMLLQAYDFYYLSKHYNCSLQLGGSDQWGNIVMGADLIRKISGKEVFGMTTPLLTTSSGAKMGKTAAGAVWLNEDLLSPYDYYQYWRNCEDADIVRFAKLYSEFTQEELNRFESLAAEDINAAKKQLAYELTKLCHSEQAAKSALETAVKIFEEGQIDENLPTVVLEQEVLQAGISAYELFHEAGLATSKSEARKLIRGNGAKINDRLVADENMIINTNFLLDKKVIKLSAGKKRHILVRV</sequence>
<dbReference type="EC" id="6.1.1.1" evidence="1"/>
<dbReference type="EMBL" id="CP001227">
    <property type="protein sequence ID" value="ACR47140.1"/>
    <property type="molecule type" value="Genomic_DNA"/>
</dbReference>
<dbReference type="RefSeq" id="WP_012736437.1">
    <property type="nucleotide sequence ID" value="NC_012730.1"/>
</dbReference>
<dbReference type="SMR" id="C4K0N9"/>
<dbReference type="KEGG" id="rpk:RPR_00970"/>
<dbReference type="HOGENOM" id="CLU_024003_0_3_5"/>
<dbReference type="Proteomes" id="UP000005015">
    <property type="component" value="Chromosome"/>
</dbReference>
<dbReference type="GO" id="GO:0005829">
    <property type="term" value="C:cytosol"/>
    <property type="evidence" value="ECO:0007669"/>
    <property type="project" value="TreeGrafter"/>
</dbReference>
<dbReference type="GO" id="GO:0005524">
    <property type="term" value="F:ATP binding"/>
    <property type="evidence" value="ECO:0007669"/>
    <property type="project" value="UniProtKB-UniRule"/>
</dbReference>
<dbReference type="GO" id="GO:0003723">
    <property type="term" value="F:RNA binding"/>
    <property type="evidence" value="ECO:0007669"/>
    <property type="project" value="UniProtKB-KW"/>
</dbReference>
<dbReference type="GO" id="GO:0004831">
    <property type="term" value="F:tyrosine-tRNA ligase activity"/>
    <property type="evidence" value="ECO:0007669"/>
    <property type="project" value="UniProtKB-UniRule"/>
</dbReference>
<dbReference type="GO" id="GO:0006437">
    <property type="term" value="P:tyrosyl-tRNA aminoacylation"/>
    <property type="evidence" value="ECO:0007669"/>
    <property type="project" value="UniProtKB-UniRule"/>
</dbReference>
<dbReference type="CDD" id="cd00165">
    <property type="entry name" value="S4"/>
    <property type="match status" value="1"/>
</dbReference>
<dbReference type="CDD" id="cd00805">
    <property type="entry name" value="TyrRS_core"/>
    <property type="match status" value="1"/>
</dbReference>
<dbReference type="FunFam" id="1.10.240.10:FF:000001">
    <property type="entry name" value="Tyrosine--tRNA ligase"/>
    <property type="match status" value="1"/>
</dbReference>
<dbReference type="Gene3D" id="3.40.50.620">
    <property type="entry name" value="HUPs"/>
    <property type="match status" value="1"/>
</dbReference>
<dbReference type="Gene3D" id="3.10.290.10">
    <property type="entry name" value="RNA-binding S4 domain"/>
    <property type="match status" value="1"/>
</dbReference>
<dbReference type="Gene3D" id="1.10.240.10">
    <property type="entry name" value="Tyrosyl-Transfer RNA Synthetase"/>
    <property type="match status" value="1"/>
</dbReference>
<dbReference type="HAMAP" id="MF_02006">
    <property type="entry name" value="Tyr_tRNA_synth_type1"/>
    <property type="match status" value="1"/>
</dbReference>
<dbReference type="InterPro" id="IPR002305">
    <property type="entry name" value="aa-tRNA-synth_Ic"/>
</dbReference>
<dbReference type="InterPro" id="IPR014729">
    <property type="entry name" value="Rossmann-like_a/b/a_fold"/>
</dbReference>
<dbReference type="InterPro" id="IPR036986">
    <property type="entry name" value="S4_RNA-bd_sf"/>
</dbReference>
<dbReference type="InterPro" id="IPR054608">
    <property type="entry name" value="SYY-like_C"/>
</dbReference>
<dbReference type="InterPro" id="IPR002307">
    <property type="entry name" value="Tyr-tRNA-ligase"/>
</dbReference>
<dbReference type="InterPro" id="IPR024088">
    <property type="entry name" value="Tyr-tRNA-ligase_bac-type"/>
</dbReference>
<dbReference type="InterPro" id="IPR024107">
    <property type="entry name" value="Tyr-tRNA-ligase_bac_1"/>
</dbReference>
<dbReference type="NCBIfam" id="TIGR00234">
    <property type="entry name" value="tyrS"/>
    <property type="match status" value="1"/>
</dbReference>
<dbReference type="PANTHER" id="PTHR11766:SF0">
    <property type="entry name" value="TYROSINE--TRNA LIGASE, MITOCHONDRIAL"/>
    <property type="match status" value="1"/>
</dbReference>
<dbReference type="PANTHER" id="PTHR11766">
    <property type="entry name" value="TYROSYL-TRNA SYNTHETASE"/>
    <property type="match status" value="1"/>
</dbReference>
<dbReference type="Pfam" id="PF22421">
    <property type="entry name" value="SYY_C-terminal"/>
    <property type="match status" value="1"/>
</dbReference>
<dbReference type="Pfam" id="PF00579">
    <property type="entry name" value="tRNA-synt_1b"/>
    <property type="match status" value="1"/>
</dbReference>
<dbReference type="PRINTS" id="PR01040">
    <property type="entry name" value="TRNASYNTHTYR"/>
</dbReference>
<dbReference type="SUPFAM" id="SSF55174">
    <property type="entry name" value="Alpha-L RNA-binding motif"/>
    <property type="match status" value="1"/>
</dbReference>
<dbReference type="SUPFAM" id="SSF52374">
    <property type="entry name" value="Nucleotidylyl transferase"/>
    <property type="match status" value="1"/>
</dbReference>
<dbReference type="PROSITE" id="PS50889">
    <property type="entry name" value="S4"/>
    <property type="match status" value="1"/>
</dbReference>
<name>SYY_RICPU</name>
<feature type="chain" id="PRO_1000216279" description="Tyrosine--tRNA ligase">
    <location>
        <begin position="1"/>
        <end position="411"/>
    </location>
</feature>
<feature type="domain" description="S4 RNA-binding" evidence="1">
    <location>
        <begin position="345"/>
        <end position="411"/>
    </location>
</feature>
<feature type="short sequence motif" description="'HIGH' region">
    <location>
        <begin position="39"/>
        <end position="48"/>
    </location>
</feature>
<feature type="short sequence motif" description="'KMSKS' region">
    <location>
        <begin position="231"/>
        <end position="235"/>
    </location>
</feature>
<feature type="binding site" evidence="1">
    <location>
        <position position="34"/>
    </location>
    <ligand>
        <name>L-tyrosine</name>
        <dbReference type="ChEBI" id="CHEBI:58315"/>
    </ligand>
</feature>
<feature type="binding site" evidence="1">
    <location>
        <position position="171"/>
    </location>
    <ligand>
        <name>L-tyrosine</name>
        <dbReference type="ChEBI" id="CHEBI:58315"/>
    </ligand>
</feature>
<feature type="binding site" evidence="1">
    <location>
        <position position="175"/>
    </location>
    <ligand>
        <name>L-tyrosine</name>
        <dbReference type="ChEBI" id="CHEBI:58315"/>
    </ligand>
</feature>
<feature type="binding site" evidence="1">
    <location>
        <position position="234"/>
    </location>
    <ligand>
        <name>ATP</name>
        <dbReference type="ChEBI" id="CHEBI:30616"/>
    </ligand>
</feature>
<keyword id="KW-0030">Aminoacyl-tRNA synthetase</keyword>
<keyword id="KW-0067">ATP-binding</keyword>
<keyword id="KW-0963">Cytoplasm</keyword>
<keyword id="KW-0436">Ligase</keyword>
<keyword id="KW-0547">Nucleotide-binding</keyword>
<keyword id="KW-0648">Protein biosynthesis</keyword>
<keyword id="KW-0694">RNA-binding</keyword>
<proteinExistence type="inferred from homology"/>